<sequence length="343" mass="36549">MGNLPSAAKHCLNYQQLLREHLWSGESVAGALDPAQEASQLSGLPEYVKIVEVGPRDGLQNEKVIVPTDIKIEFINQLSQTGLSVIEVTSFVSSRWVPQMADHAEVMGGIHQYPGVRYPVLVPNLQGLQHAVAAGATEIAVFGAASESFSKKNINCSIEESMGRFEQVISSARHMNIPVRGYVSCALGCPYEGSIMPQKVTEVSKRLYSMGCYEISLGDTVGVGTPGSMKTMLESVMKEIPPGALAVHCHDTYGQALANILTALQMGINVVDSAVSGLGGCPYAKGASGNVATEDLIYMLNGMGLNTGVDLHKVMEAGDFICKAVNKTTNSKVAQASFKARLE</sequence>
<feature type="initiator methionine" description="Removed">
    <location>
        <position position="1"/>
    </location>
</feature>
<feature type="chain" id="PRO_0000419685" description="3-hydroxy-3-methylglutaryl-CoA lyase, cytoplasmic">
    <location>
        <begin position="2"/>
        <end position="343"/>
    </location>
</feature>
<feature type="domain" description="Pyruvate carboxyltransferase" evidence="2">
    <location>
        <begin position="48"/>
        <end position="315"/>
    </location>
</feature>
<feature type="active site" evidence="1">
    <location>
        <position position="281"/>
    </location>
</feature>
<feature type="binding site" evidence="1">
    <location>
        <position position="56"/>
    </location>
    <ligand>
        <name>substrate</name>
    </ligand>
</feature>
<feature type="binding site" evidence="1">
    <location>
        <position position="57"/>
    </location>
    <ligand>
        <name>a divalent metal cation</name>
        <dbReference type="ChEBI" id="CHEBI:60240"/>
    </ligand>
</feature>
<feature type="binding site" evidence="1">
    <location>
        <position position="248"/>
    </location>
    <ligand>
        <name>a divalent metal cation</name>
        <dbReference type="ChEBI" id="CHEBI:60240"/>
    </ligand>
</feature>
<feature type="binding site" evidence="1">
    <location>
        <position position="250"/>
    </location>
    <ligand>
        <name>a divalent metal cation</name>
        <dbReference type="ChEBI" id="CHEBI:60240"/>
    </ligand>
</feature>
<feature type="binding site" evidence="1">
    <location>
        <position position="290"/>
    </location>
    <ligand>
        <name>a divalent metal cation</name>
        <dbReference type="ChEBI" id="CHEBI:60240"/>
    </ligand>
</feature>
<feature type="lipid moiety-binding region" description="N-myristoyl glycine" evidence="1">
    <location>
        <position position="2"/>
    </location>
</feature>
<organism>
    <name type="scientific">Rattus norvegicus</name>
    <name type="common">Rat</name>
    <dbReference type="NCBI Taxonomy" id="10116"/>
    <lineage>
        <taxon>Eukaryota</taxon>
        <taxon>Metazoa</taxon>
        <taxon>Chordata</taxon>
        <taxon>Craniata</taxon>
        <taxon>Vertebrata</taxon>
        <taxon>Euteleostomi</taxon>
        <taxon>Mammalia</taxon>
        <taxon>Eutheria</taxon>
        <taxon>Euarchontoglires</taxon>
        <taxon>Glires</taxon>
        <taxon>Rodentia</taxon>
        <taxon>Myomorpha</taxon>
        <taxon>Muroidea</taxon>
        <taxon>Muridae</taxon>
        <taxon>Murinae</taxon>
        <taxon>Rattus</taxon>
    </lineage>
</organism>
<keyword id="KW-0963">Cytoplasm</keyword>
<keyword id="KW-0256">Endoplasmic reticulum</keyword>
<keyword id="KW-0443">Lipid metabolism</keyword>
<keyword id="KW-0449">Lipoprotein</keyword>
<keyword id="KW-0456">Lyase</keyword>
<keyword id="KW-0472">Membrane</keyword>
<keyword id="KW-0479">Metal-binding</keyword>
<keyword id="KW-0519">Myristate</keyword>
<keyword id="KW-1185">Reference proteome</keyword>
<proteinExistence type="evidence at protein level"/>
<gene>
    <name type="primary">Hmgcll1</name>
</gene>
<evidence type="ECO:0000250" key="1"/>
<evidence type="ECO:0000255" key="2">
    <source>
        <dbReference type="PROSITE-ProRule" id="PRU01151"/>
    </source>
</evidence>
<evidence type="ECO:0000269" key="3">
    <source>
    </source>
</evidence>
<evidence type="ECO:0000305" key="4"/>
<reference key="1">
    <citation type="journal article" date="2004" name="Nature">
        <title>Genome sequence of the Brown Norway rat yields insights into mammalian evolution.</title>
        <authorList>
            <person name="Gibbs R.A."/>
            <person name="Weinstock G.M."/>
            <person name="Metzker M.L."/>
            <person name="Muzny D.M."/>
            <person name="Sodergren E.J."/>
            <person name="Scherer S."/>
            <person name="Scott G."/>
            <person name="Steffen D."/>
            <person name="Worley K.C."/>
            <person name="Burch P.E."/>
            <person name="Okwuonu G."/>
            <person name="Hines S."/>
            <person name="Lewis L."/>
            <person name="Deramo C."/>
            <person name="Delgado O."/>
            <person name="Dugan-Rocha S."/>
            <person name="Miner G."/>
            <person name="Morgan M."/>
            <person name="Hawes A."/>
            <person name="Gill R."/>
            <person name="Holt R.A."/>
            <person name="Adams M.D."/>
            <person name="Amanatides P.G."/>
            <person name="Baden-Tillson H."/>
            <person name="Barnstead M."/>
            <person name="Chin S."/>
            <person name="Evans C.A."/>
            <person name="Ferriera S."/>
            <person name="Fosler C."/>
            <person name="Glodek A."/>
            <person name="Gu Z."/>
            <person name="Jennings D."/>
            <person name="Kraft C.L."/>
            <person name="Nguyen T."/>
            <person name="Pfannkoch C.M."/>
            <person name="Sitter C."/>
            <person name="Sutton G.G."/>
            <person name="Venter J.C."/>
            <person name="Woodage T."/>
            <person name="Smith D."/>
            <person name="Lee H.-M."/>
            <person name="Gustafson E."/>
            <person name="Cahill P."/>
            <person name="Kana A."/>
            <person name="Doucette-Stamm L."/>
            <person name="Weinstock K."/>
            <person name="Fechtel K."/>
            <person name="Weiss R.B."/>
            <person name="Dunn D.M."/>
            <person name="Green E.D."/>
            <person name="Blakesley R.W."/>
            <person name="Bouffard G.G."/>
            <person name="De Jong P.J."/>
            <person name="Osoegawa K."/>
            <person name="Zhu B."/>
            <person name="Marra M."/>
            <person name="Schein J."/>
            <person name="Bosdet I."/>
            <person name="Fjell C."/>
            <person name="Jones S."/>
            <person name="Krzywinski M."/>
            <person name="Mathewson C."/>
            <person name="Siddiqui A."/>
            <person name="Wye N."/>
            <person name="McPherson J."/>
            <person name="Zhao S."/>
            <person name="Fraser C.M."/>
            <person name="Shetty J."/>
            <person name="Shatsman S."/>
            <person name="Geer K."/>
            <person name="Chen Y."/>
            <person name="Abramzon S."/>
            <person name="Nierman W.C."/>
            <person name="Havlak P.H."/>
            <person name="Chen R."/>
            <person name="Durbin K.J."/>
            <person name="Egan A."/>
            <person name="Ren Y."/>
            <person name="Song X.-Z."/>
            <person name="Li B."/>
            <person name="Liu Y."/>
            <person name="Qin X."/>
            <person name="Cawley S."/>
            <person name="Cooney A.J."/>
            <person name="D'Souza L.M."/>
            <person name="Martin K."/>
            <person name="Wu J.Q."/>
            <person name="Gonzalez-Garay M.L."/>
            <person name="Jackson A.R."/>
            <person name="Kalafus K.J."/>
            <person name="McLeod M.P."/>
            <person name="Milosavljevic A."/>
            <person name="Virk D."/>
            <person name="Volkov A."/>
            <person name="Wheeler D.A."/>
            <person name="Zhang Z."/>
            <person name="Bailey J.A."/>
            <person name="Eichler E.E."/>
            <person name="Tuzun E."/>
            <person name="Birney E."/>
            <person name="Mongin E."/>
            <person name="Ureta-Vidal A."/>
            <person name="Woodwark C."/>
            <person name="Zdobnov E."/>
            <person name="Bork P."/>
            <person name="Suyama M."/>
            <person name="Torrents D."/>
            <person name="Alexandersson M."/>
            <person name="Trask B.J."/>
            <person name="Young J.M."/>
            <person name="Huang H."/>
            <person name="Wang H."/>
            <person name="Xing H."/>
            <person name="Daniels S."/>
            <person name="Gietzen D."/>
            <person name="Schmidt J."/>
            <person name="Stevens K."/>
            <person name="Vitt U."/>
            <person name="Wingrove J."/>
            <person name="Camara F."/>
            <person name="Mar Alba M."/>
            <person name="Abril J.F."/>
            <person name="Guigo R."/>
            <person name="Smit A."/>
            <person name="Dubchak I."/>
            <person name="Rubin E.M."/>
            <person name="Couronne O."/>
            <person name="Poliakov A."/>
            <person name="Huebner N."/>
            <person name="Ganten D."/>
            <person name="Goesele C."/>
            <person name="Hummel O."/>
            <person name="Kreitler T."/>
            <person name="Lee Y.-A."/>
            <person name="Monti J."/>
            <person name="Schulz H."/>
            <person name="Zimdahl H."/>
            <person name="Himmelbauer H."/>
            <person name="Lehrach H."/>
            <person name="Jacob H.J."/>
            <person name="Bromberg S."/>
            <person name="Gullings-Handley J."/>
            <person name="Jensen-Seaman M.I."/>
            <person name="Kwitek A.E."/>
            <person name="Lazar J."/>
            <person name="Pasko D."/>
            <person name="Tonellato P.J."/>
            <person name="Twigger S."/>
            <person name="Ponting C.P."/>
            <person name="Duarte J.M."/>
            <person name="Rice S."/>
            <person name="Goodstadt L."/>
            <person name="Beatson S.A."/>
            <person name="Emes R.D."/>
            <person name="Winter E.E."/>
            <person name="Webber C."/>
            <person name="Brandt P."/>
            <person name="Nyakatura G."/>
            <person name="Adetobi M."/>
            <person name="Chiaromonte F."/>
            <person name="Elnitski L."/>
            <person name="Eswara P."/>
            <person name="Hardison R.C."/>
            <person name="Hou M."/>
            <person name="Kolbe D."/>
            <person name="Makova K."/>
            <person name="Miller W."/>
            <person name="Nekrutenko A."/>
            <person name="Riemer C."/>
            <person name="Schwartz S."/>
            <person name="Taylor J."/>
            <person name="Yang S."/>
            <person name="Zhang Y."/>
            <person name="Lindpaintner K."/>
            <person name="Andrews T.D."/>
            <person name="Caccamo M."/>
            <person name="Clamp M."/>
            <person name="Clarke L."/>
            <person name="Curwen V."/>
            <person name="Durbin R.M."/>
            <person name="Eyras E."/>
            <person name="Searle S.M."/>
            <person name="Cooper G.M."/>
            <person name="Batzoglou S."/>
            <person name="Brudno M."/>
            <person name="Sidow A."/>
            <person name="Stone E.A."/>
            <person name="Payseur B.A."/>
            <person name="Bourque G."/>
            <person name="Lopez-Otin C."/>
            <person name="Puente X.S."/>
            <person name="Chakrabarti K."/>
            <person name="Chatterji S."/>
            <person name="Dewey C."/>
            <person name="Pachter L."/>
            <person name="Bray N."/>
            <person name="Yap V.B."/>
            <person name="Caspi A."/>
            <person name="Tesler G."/>
            <person name="Pevzner P.A."/>
            <person name="Haussler D."/>
            <person name="Roskin K.M."/>
            <person name="Baertsch R."/>
            <person name="Clawson H."/>
            <person name="Furey T.S."/>
            <person name="Hinrichs A.S."/>
            <person name="Karolchik D."/>
            <person name="Kent W.J."/>
            <person name="Rosenbloom K.R."/>
            <person name="Trumbower H."/>
            <person name="Weirauch M."/>
            <person name="Cooper D.N."/>
            <person name="Stenson P.D."/>
            <person name="Ma B."/>
            <person name="Brent M."/>
            <person name="Arumugam M."/>
            <person name="Shteynberg D."/>
            <person name="Copley R.R."/>
            <person name="Taylor M.S."/>
            <person name="Riethman H."/>
            <person name="Mudunuri U."/>
            <person name="Peterson J."/>
            <person name="Guyer M."/>
            <person name="Felsenfeld A."/>
            <person name="Old S."/>
            <person name="Mockrin S."/>
            <person name="Collins F.S."/>
        </authorList>
    </citation>
    <scope>NUCLEOTIDE SEQUENCE [LARGE SCALE GENOMIC DNA]</scope>
    <source>
        <strain>Brown Norway</strain>
    </source>
</reference>
<reference key="2">
    <citation type="submission" date="2005-07" db="EMBL/GenBank/DDBJ databases">
        <authorList>
            <person name="Mural R.J."/>
            <person name="Adams M.D."/>
            <person name="Myers E.W."/>
            <person name="Smith H.O."/>
            <person name="Venter J.C."/>
        </authorList>
    </citation>
    <scope>NUCLEOTIDE SEQUENCE [LARGE SCALE GENOMIC DNA]</scope>
    <source>
        <strain>Brown Norway</strain>
    </source>
</reference>
<reference key="3">
    <citation type="journal article" date="2012" name="J. Biol. Chem.">
        <title>Identification and characterization of an extramitochondrial human 3-Hydroxy-3-methylglutaryl-CoA lyase.</title>
        <authorList>
            <person name="Montgomery C."/>
            <person name="Pei Z."/>
            <person name="Watkins P.A."/>
            <person name="Miziorko H.M."/>
        </authorList>
    </citation>
    <scope>TISSUE SPECIFICITY</scope>
</reference>
<dbReference type="EC" id="4.1.3.4"/>
<dbReference type="EMBL" id="CH473954">
    <property type="protein sequence ID" value="EDL77774.1"/>
    <property type="molecule type" value="Genomic_DNA"/>
</dbReference>
<dbReference type="RefSeq" id="NP_001263401.1">
    <property type="nucleotide sequence ID" value="NM_001276472.3"/>
</dbReference>
<dbReference type="SMR" id="D4A5C3"/>
<dbReference type="FunCoup" id="D4A5C3">
    <property type="interactions" value="1001"/>
</dbReference>
<dbReference type="STRING" id="10116.ENSRNOP00000014927"/>
<dbReference type="iPTMnet" id="D4A5C3"/>
<dbReference type="PhosphoSitePlus" id="D4A5C3"/>
<dbReference type="PaxDb" id="10116-ENSRNOP00000014927"/>
<dbReference type="PeptideAtlas" id="D4A5C3"/>
<dbReference type="Ensembl" id="ENSRNOT00000014926.7">
    <property type="protein sequence ID" value="ENSRNOP00000014927.3"/>
    <property type="gene ID" value="ENSRNOG00000011193.7"/>
</dbReference>
<dbReference type="GeneID" id="367112"/>
<dbReference type="KEGG" id="rno:367112"/>
<dbReference type="UCSC" id="RGD:1565090">
    <property type="organism name" value="rat"/>
</dbReference>
<dbReference type="AGR" id="RGD:1565090"/>
<dbReference type="CTD" id="54511"/>
<dbReference type="RGD" id="1565090">
    <property type="gene designation" value="Hmgcll1"/>
</dbReference>
<dbReference type="eggNOG" id="KOG2368">
    <property type="taxonomic scope" value="Eukaryota"/>
</dbReference>
<dbReference type="GeneTree" id="ENSGT00940000159467"/>
<dbReference type="HOGENOM" id="CLU_022138_3_1_1"/>
<dbReference type="InParanoid" id="D4A5C3"/>
<dbReference type="OMA" id="VATAWDC"/>
<dbReference type="OrthoDB" id="1905920at2759"/>
<dbReference type="PhylomeDB" id="D4A5C3"/>
<dbReference type="TreeFam" id="TF105363"/>
<dbReference type="Reactome" id="R-RNO-77111">
    <property type="pathway name" value="Synthesis of Ketone Bodies"/>
</dbReference>
<dbReference type="UniPathway" id="UPA00896">
    <property type="reaction ID" value="UER00863"/>
</dbReference>
<dbReference type="PRO" id="PR:D4A5C3"/>
<dbReference type="Proteomes" id="UP000002494">
    <property type="component" value="Chromosome 8"/>
</dbReference>
<dbReference type="Proteomes" id="UP000234681">
    <property type="component" value="Chromosome 8"/>
</dbReference>
<dbReference type="Bgee" id="ENSRNOG00000011193">
    <property type="expression patterns" value="Expressed in cerebellum and 10 other cell types or tissues"/>
</dbReference>
<dbReference type="GO" id="GO:0005829">
    <property type="term" value="C:cytosol"/>
    <property type="evidence" value="ECO:0000250"/>
    <property type="project" value="UniProtKB"/>
</dbReference>
<dbReference type="GO" id="GO:0005783">
    <property type="term" value="C:endoplasmic reticulum"/>
    <property type="evidence" value="ECO:0000250"/>
    <property type="project" value="UniProtKB"/>
</dbReference>
<dbReference type="GO" id="GO:0005789">
    <property type="term" value="C:endoplasmic reticulum membrane"/>
    <property type="evidence" value="ECO:0007669"/>
    <property type="project" value="UniProtKB-SubCell"/>
</dbReference>
<dbReference type="GO" id="GO:0016020">
    <property type="term" value="C:membrane"/>
    <property type="evidence" value="ECO:0000250"/>
    <property type="project" value="UniProtKB"/>
</dbReference>
<dbReference type="GO" id="GO:0048471">
    <property type="term" value="C:perinuclear region of cytoplasm"/>
    <property type="evidence" value="ECO:0000250"/>
    <property type="project" value="UniProtKB"/>
</dbReference>
<dbReference type="GO" id="GO:0004419">
    <property type="term" value="F:hydroxymethylglutaryl-CoA lyase activity"/>
    <property type="evidence" value="ECO:0000250"/>
    <property type="project" value="UniProtKB"/>
</dbReference>
<dbReference type="GO" id="GO:0046872">
    <property type="term" value="F:metal ion binding"/>
    <property type="evidence" value="ECO:0007669"/>
    <property type="project" value="UniProtKB-KW"/>
</dbReference>
<dbReference type="GO" id="GO:0046951">
    <property type="term" value="P:ketone body biosynthetic process"/>
    <property type="evidence" value="ECO:0000250"/>
    <property type="project" value="UniProtKB"/>
</dbReference>
<dbReference type="GO" id="GO:0006552">
    <property type="term" value="P:L-leucine catabolic process"/>
    <property type="evidence" value="ECO:0000318"/>
    <property type="project" value="GO_Central"/>
</dbReference>
<dbReference type="CDD" id="cd07938">
    <property type="entry name" value="DRE_TIM_HMGL"/>
    <property type="match status" value="1"/>
</dbReference>
<dbReference type="FunFam" id="3.20.20.70:FF:000038">
    <property type="entry name" value="Hydroxymethylglutaryl-CoA lyase, mitochondrial"/>
    <property type="match status" value="1"/>
</dbReference>
<dbReference type="Gene3D" id="3.20.20.70">
    <property type="entry name" value="Aldolase class I"/>
    <property type="match status" value="1"/>
</dbReference>
<dbReference type="InterPro" id="IPR013785">
    <property type="entry name" value="Aldolase_TIM"/>
</dbReference>
<dbReference type="InterPro" id="IPR043594">
    <property type="entry name" value="HMGL"/>
</dbReference>
<dbReference type="InterPro" id="IPR000891">
    <property type="entry name" value="PYR_CT"/>
</dbReference>
<dbReference type="NCBIfam" id="NF004283">
    <property type="entry name" value="PRK05692.1"/>
    <property type="match status" value="1"/>
</dbReference>
<dbReference type="PANTHER" id="PTHR42738:SF5">
    <property type="entry name" value="3-HYDROXY-3-METHYLGLUTARYL-COA LYASE, CYTOPLASMIC"/>
    <property type="match status" value="1"/>
</dbReference>
<dbReference type="PANTHER" id="PTHR42738">
    <property type="entry name" value="HYDROXYMETHYLGLUTARYL-COA LYASE"/>
    <property type="match status" value="1"/>
</dbReference>
<dbReference type="Pfam" id="PF00682">
    <property type="entry name" value="HMGL-like"/>
    <property type="match status" value="1"/>
</dbReference>
<dbReference type="SUPFAM" id="SSF51569">
    <property type="entry name" value="Aldolase"/>
    <property type="match status" value="1"/>
</dbReference>
<dbReference type="PROSITE" id="PS50991">
    <property type="entry name" value="PYR_CT"/>
    <property type="match status" value="1"/>
</dbReference>
<protein>
    <recommendedName>
        <fullName>3-hydroxy-3-methylglutaryl-CoA lyase, cytoplasmic</fullName>
        <ecNumber>4.1.3.4</ecNumber>
    </recommendedName>
    <alternativeName>
        <fullName>3-hydroxy-3-methylglutaryl-CoA lyase-like protein 1</fullName>
    </alternativeName>
</protein>
<accession>D4A5C3</accession>
<name>HMGC2_RAT</name>
<comment type="function">
    <text evidence="1">Non-mitochondrial 3-hydroxy-3-methylglutaryl-CoA lyase that catalyzes a cation-dependent cleavage of (S)-3-hydroxy-3-methylglutaryl-CoA into acetyl-CoA and acetoacetate, a key step in ketogenesis, the products of which support energy production in nonhepatic animal tissues.</text>
</comment>
<comment type="catalytic activity">
    <reaction>
        <text>(3S)-3-hydroxy-3-methylglutaryl-CoA = acetoacetate + acetyl-CoA</text>
        <dbReference type="Rhea" id="RHEA:24404"/>
        <dbReference type="ChEBI" id="CHEBI:13705"/>
        <dbReference type="ChEBI" id="CHEBI:43074"/>
        <dbReference type="ChEBI" id="CHEBI:57288"/>
        <dbReference type="EC" id="4.1.3.4"/>
    </reaction>
</comment>
<comment type="cofactor">
    <cofactor evidence="1">
        <name>a divalent metal cation</name>
        <dbReference type="ChEBI" id="CHEBI:60240"/>
    </cofactor>
</comment>
<comment type="pathway">
    <text>Metabolic intermediate metabolism; (S)-3-hydroxy-3-methylglutaryl-CoA degradation; acetoacetate from (S)-3-hydroxy-3-methylglutaryl-CoA: step 1/1.</text>
</comment>
<comment type="subcellular location">
    <subcellularLocation>
        <location evidence="1">Cytoplasm</location>
        <location evidence="1">Cytosol</location>
    </subcellularLocation>
    <subcellularLocation>
        <location evidence="1">Endoplasmic reticulum membrane</location>
        <topology evidence="1">Peripheral membrane protein</topology>
    </subcellularLocation>
</comment>
<comment type="tissue specificity">
    <text evidence="3">Present at high level in duodenum and small intestine (at protein level).</text>
</comment>
<comment type="similarity">
    <text evidence="4">Belongs to the HMG-CoA lyase family.</text>
</comment>